<gene>
    <name evidence="1" type="primary">argH</name>
    <name type="ordered locus">Plav_1602</name>
</gene>
<name>ARLY_PARL1</name>
<evidence type="ECO:0000255" key="1">
    <source>
        <dbReference type="HAMAP-Rule" id="MF_00006"/>
    </source>
</evidence>
<dbReference type="EC" id="4.3.2.1" evidence="1"/>
<dbReference type="EMBL" id="CP000774">
    <property type="protein sequence ID" value="ABS63221.1"/>
    <property type="molecule type" value="Genomic_DNA"/>
</dbReference>
<dbReference type="RefSeq" id="WP_012110509.1">
    <property type="nucleotide sequence ID" value="NC_009719.1"/>
</dbReference>
<dbReference type="SMR" id="A7HTI8"/>
<dbReference type="STRING" id="402881.Plav_1602"/>
<dbReference type="KEGG" id="pla:Plav_1602"/>
<dbReference type="eggNOG" id="COG0165">
    <property type="taxonomic scope" value="Bacteria"/>
</dbReference>
<dbReference type="HOGENOM" id="CLU_027272_2_3_5"/>
<dbReference type="OrthoDB" id="9769623at2"/>
<dbReference type="UniPathway" id="UPA00068">
    <property type="reaction ID" value="UER00114"/>
</dbReference>
<dbReference type="Proteomes" id="UP000006377">
    <property type="component" value="Chromosome"/>
</dbReference>
<dbReference type="GO" id="GO:0005829">
    <property type="term" value="C:cytosol"/>
    <property type="evidence" value="ECO:0007669"/>
    <property type="project" value="TreeGrafter"/>
</dbReference>
<dbReference type="GO" id="GO:0004056">
    <property type="term" value="F:argininosuccinate lyase activity"/>
    <property type="evidence" value="ECO:0007669"/>
    <property type="project" value="UniProtKB-UniRule"/>
</dbReference>
<dbReference type="GO" id="GO:0042450">
    <property type="term" value="P:arginine biosynthetic process via ornithine"/>
    <property type="evidence" value="ECO:0007669"/>
    <property type="project" value="InterPro"/>
</dbReference>
<dbReference type="GO" id="GO:0006526">
    <property type="term" value="P:L-arginine biosynthetic process"/>
    <property type="evidence" value="ECO:0007669"/>
    <property type="project" value="UniProtKB-UniRule"/>
</dbReference>
<dbReference type="CDD" id="cd01359">
    <property type="entry name" value="Argininosuccinate_lyase"/>
    <property type="match status" value="1"/>
</dbReference>
<dbReference type="FunFam" id="1.10.275.10:FF:000002">
    <property type="entry name" value="Argininosuccinate lyase"/>
    <property type="match status" value="1"/>
</dbReference>
<dbReference type="FunFam" id="1.10.40.30:FF:000001">
    <property type="entry name" value="Argininosuccinate lyase"/>
    <property type="match status" value="1"/>
</dbReference>
<dbReference type="FunFam" id="1.20.200.10:FF:000015">
    <property type="entry name" value="argininosuccinate lyase isoform X2"/>
    <property type="match status" value="1"/>
</dbReference>
<dbReference type="Gene3D" id="1.10.40.30">
    <property type="entry name" value="Fumarase/aspartase (C-terminal domain)"/>
    <property type="match status" value="1"/>
</dbReference>
<dbReference type="Gene3D" id="1.20.200.10">
    <property type="entry name" value="Fumarase/aspartase (Central domain)"/>
    <property type="match status" value="1"/>
</dbReference>
<dbReference type="Gene3D" id="1.10.275.10">
    <property type="entry name" value="Fumarase/aspartase (N-terminal domain)"/>
    <property type="match status" value="1"/>
</dbReference>
<dbReference type="HAMAP" id="MF_00006">
    <property type="entry name" value="Arg_succ_lyase"/>
    <property type="match status" value="1"/>
</dbReference>
<dbReference type="InterPro" id="IPR029419">
    <property type="entry name" value="Arg_succ_lyase_C"/>
</dbReference>
<dbReference type="InterPro" id="IPR009049">
    <property type="entry name" value="Argininosuccinate_lyase"/>
</dbReference>
<dbReference type="InterPro" id="IPR024083">
    <property type="entry name" value="Fumarase/histidase_N"/>
</dbReference>
<dbReference type="InterPro" id="IPR020557">
    <property type="entry name" value="Fumarate_lyase_CS"/>
</dbReference>
<dbReference type="InterPro" id="IPR000362">
    <property type="entry name" value="Fumarate_lyase_fam"/>
</dbReference>
<dbReference type="InterPro" id="IPR022761">
    <property type="entry name" value="Fumarate_lyase_N"/>
</dbReference>
<dbReference type="InterPro" id="IPR008948">
    <property type="entry name" value="L-Aspartase-like"/>
</dbReference>
<dbReference type="NCBIfam" id="TIGR00838">
    <property type="entry name" value="argH"/>
    <property type="match status" value="1"/>
</dbReference>
<dbReference type="PANTHER" id="PTHR43814">
    <property type="entry name" value="ARGININOSUCCINATE LYASE"/>
    <property type="match status" value="1"/>
</dbReference>
<dbReference type="PANTHER" id="PTHR43814:SF1">
    <property type="entry name" value="ARGININOSUCCINATE LYASE"/>
    <property type="match status" value="1"/>
</dbReference>
<dbReference type="Pfam" id="PF14698">
    <property type="entry name" value="ASL_C2"/>
    <property type="match status" value="1"/>
</dbReference>
<dbReference type="Pfam" id="PF00206">
    <property type="entry name" value="Lyase_1"/>
    <property type="match status" value="1"/>
</dbReference>
<dbReference type="PRINTS" id="PR00145">
    <property type="entry name" value="ARGSUCLYASE"/>
</dbReference>
<dbReference type="PRINTS" id="PR00149">
    <property type="entry name" value="FUMRATELYASE"/>
</dbReference>
<dbReference type="SUPFAM" id="SSF48557">
    <property type="entry name" value="L-aspartase-like"/>
    <property type="match status" value="1"/>
</dbReference>
<dbReference type="PROSITE" id="PS00163">
    <property type="entry name" value="FUMARATE_LYASES"/>
    <property type="match status" value="1"/>
</dbReference>
<feature type="chain" id="PRO_1000070921" description="Argininosuccinate lyase">
    <location>
        <begin position="1"/>
        <end position="460"/>
    </location>
</feature>
<keyword id="KW-0028">Amino-acid biosynthesis</keyword>
<keyword id="KW-0055">Arginine biosynthesis</keyword>
<keyword id="KW-0963">Cytoplasm</keyword>
<keyword id="KW-0456">Lyase</keyword>
<keyword id="KW-1185">Reference proteome</keyword>
<reference key="1">
    <citation type="journal article" date="2011" name="Stand. Genomic Sci.">
        <title>Complete genome sequence of Parvibaculum lavamentivorans type strain (DS-1(T)).</title>
        <authorList>
            <person name="Schleheck D."/>
            <person name="Weiss M."/>
            <person name="Pitluck S."/>
            <person name="Bruce D."/>
            <person name="Land M.L."/>
            <person name="Han S."/>
            <person name="Saunders E."/>
            <person name="Tapia R."/>
            <person name="Detter C."/>
            <person name="Brettin T."/>
            <person name="Han J."/>
            <person name="Woyke T."/>
            <person name="Goodwin L."/>
            <person name="Pennacchio L."/>
            <person name="Nolan M."/>
            <person name="Cook A.M."/>
            <person name="Kjelleberg S."/>
            <person name="Thomas T."/>
        </authorList>
    </citation>
    <scope>NUCLEOTIDE SEQUENCE [LARGE SCALE GENOMIC DNA]</scope>
    <source>
        <strain>DS-1 / DSM 13023 / NCIMB 13966</strain>
    </source>
</reference>
<organism>
    <name type="scientific">Parvibaculum lavamentivorans (strain DS-1 / DSM 13023 / NCIMB 13966)</name>
    <dbReference type="NCBI Taxonomy" id="402881"/>
    <lineage>
        <taxon>Bacteria</taxon>
        <taxon>Pseudomonadati</taxon>
        <taxon>Pseudomonadota</taxon>
        <taxon>Alphaproteobacteria</taxon>
        <taxon>Hyphomicrobiales</taxon>
        <taxon>Parvibaculaceae</taxon>
        <taxon>Parvibaculum</taxon>
    </lineage>
</organism>
<sequence length="460" mass="49984">MSNKMWGGRFGEGPDRIMEEINASIGFDQRFFAQDIRGSKAHCRMLAEKGIISSEDAAQIVAGLDVVLAEIENGTFHFKRELEDIHMNVESRLADLIGAAAGRLHTARSRNDQVATDFKLYIRDTIDHLDEQLADFQRALVDRAEEHAATIMPGFTHLQTAQPVTFGHHCLAYAEMAGRDRGRLADARRRLNESPLGAAALAGTSFPIDRHMTAAELGFDGPTRNSLDSVSDRDFVLETLSAAAIAATHLSRLAEEIVIWSTPGFDFVRLTDGFTTGSSIMPQKRNPDAAELVRAKSGRVIGDLTSLLIVMKGLPLAYSKDMQEDKEAAFDALDALSLSLAAMTGMVRTLTVNETAMRNAASRGFSTATDLADWLVRALGLPFRQAHHATGALVAKAEKKGTDLDGLTLAEMQEVEPGITDEVYSVLGVDNSVASRTSFGGTAPDNIRAAVRRWRDELGS</sequence>
<comment type="catalytic activity">
    <reaction evidence="1">
        <text>2-(N(omega)-L-arginino)succinate = fumarate + L-arginine</text>
        <dbReference type="Rhea" id="RHEA:24020"/>
        <dbReference type="ChEBI" id="CHEBI:29806"/>
        <dbReference type="ChEBI" id="CHEBI:32682"/>
        <dbReference type="ChEBI" id="CHEBI:57472"/>
        <dbReference type="EC" id="4.3.2.1"/>
    </reaction>
</comment>
<comment type="pathway">
    <text evidence="1">Amino-acid biosynthesis; L-arginine biosynthesis; L-arginine from L-ornithine and carbamoyl phosphate: step 3/3.</text>
</comment>
<comment type="subcellular location">
    <subcellularLocation>
        <location evidence="1">Cytoplasm</location>
    </subcellularLocation>
</comment>
<comment type="similarity">
    <text evidence="1">Belongs to the lyase 1 family. Argininosuccinate lyase subfamily.</text>
</comment>
<proteinExistence type="inferred from homology"/>
<protein>
    <recommendedName>
        <fullName evidence="1">Argininosuccinate lyase</fullName>
        <shortName evidence="1">ASAL</shortName>
        <ecNumber evidence="1">4.3.2.1</ecNumber>
    </recommendedName>
    <alternativeName>
        <fullName evidence="1">Arginosuccinase</fullName>
    </alternativeName>
</protein>
<accession>A7HTI8</accession>